<dbReference type="EC" id="2.3.1.117" evidence="1"/>
<dbReference type="EMBL" id="CP000880">
    <property type="protein sequence ID" value="ABX22639.1"/>
    <property type="molecule type" value="Genomic_DNA"/>
</dbReference>
<dbReference type="SMR" id="A9MPJ6"/>
<dbReference type="STRING" id="41514.SARI_02791"/>
<dbReference type="KEGG" id="ses:SARI_02791"/>
<dbReference type="HOGENOM" id="CLU_050859_0_1_6"/>
<dbReference type="UniPathway" id="UPA00034">
    <property type="reaction ID" value="UER00019"/>
</dbReference>
<dbReference type="Proteomes" id="UP000002084">
    <property type="component" value="Chromosome"/>
</dbReference>
<dbReference type="GO" id="GO:0005737">
    <property type="term" value="C:cytoplasm"/>
    <property type="evidence" value="ECO:0007669"/>
    <property type="project" value="UniProtKB-SubCell"/>
</dbReference>
<dbReference type="GO" id="GO:0008666">
    <property type="term" value="F:2,3,4,5-tetrahydropyridine-2,6-dicarboxylate N-succinyltransferase activity"/>
    <property type="evidence" value="ECO:0007669"/>
    <property type="project" value="UniProtKB-UniRule"/>
</dbReference>
<dbReference type="GO" id="GO:0016779">
    <property type="term" value="F:nucleotidyltransferase activity"/>
    <property type="evidence" value="ECO:0007669"/>
    <property type="project" value="TreeGrafter"/>
</dbReference>
<dbReference type="GO" id="GO:0019877">
    <property type="term" value="P:diaminopimelate biosynthetic process"/>
    <property type="evidence" value="ECO:0007669"/>
    <property type="project" value="UniProtKB-UniRule"/>
</dbReference>
<dbReference type="GO" id="GO:0009089">
    <property type="term" value="P:lysine biosynthetic process via diaminopimelate"/>
    <property type="evidence" value="ECO:0007669"/>
    <property type="project" value="UniProtKB-UniRule"/>
</dbReference>
<dbReference type="CDD" id="cd03350">
    <property type="entry name" value="LbH_THP_succinylT"/>
    <property type="match status" value="1"/>
</dbReference>
<dbReference type="FunFam" id="1.10.166.10:FF:000001">
    <property type="entry name" value="2,3,4,5-tetrahydropyridine-2,6-dicarboxylate N-succinyltransferase"/>
    <property type="match status" value="1"/>
</dbReference>
<dbReference type="FunFam" id="2.160.10.10:FF:000004">
    <property type="entry name" value="2,3,4,5-tetrahydropyridine-2,6-dicarboxylate N-succinyltransferase"/>
    <property type="match status" value="1"/>
</dbReference>
<dbReference type="Gene3D" id="2.160.10.10">
    <property type="entry name" value="Hexapeptide repeat proteins"/>
    <property type="match status" value="1"/>
</dbReference>
<dbReference type="Gene3D" id="1.10.166.10">
    <property type="entry name" value="Tetrahydrodipicolinate-N-succinyltransferase, N-terminal domain"/>
    <property type="match status" value="1"/>
</dbReference>
<dbReference type="HAMAP" id="MF_00811">
    <property type="entry name" value="DapD"/>
    <property type="match status" value="1"/>
</dbReference>
<dbReference type="InterPro" id="IPR005664">
    <property type="entry name" value="DapD_Trfase_Hexpep_rpt_fam"/>
</dbReference>
<dbReference type="InterPro" id="IPR001451">
    <property type="entry name" value="Hexapep"/>
</dbReference>
<dbReference type="InterPro" id="IPR018357">
    <property type="entry name" value="Hexapep_transf_CS"/>
</dbReference>
<dbReference type="InterPro" id="IPR023180">
    <property type="entry name" value="THP_succinylTrfase_dom1"/>
</dbReference>
<dbReference type="InterPro" id="IPR037133">
    <property type="entry name" value="THP_succinylTrfase_N_sf"/>
</dbReference>
<dbReference type="InterPro" id="IPR011004">
    <property type="entry name" value="Trimer_LpxA-like_sf"/>
</dbReference>
<dbReference type="NCBIfam" id="TIGR00965">
    <property type="entry name" value="dapD"/>
    <property type="match status" value="1"/>
</dbReference>
<dbReference type="NCBIfam" id="NF008808">
    <property type="entry name" value="PRK11830.1"/>
    <property type="match status" value="1"/>
</dbReference>
<dbReference type="PANTHER" id="PTHR19136:SF52">
    <property type="entry name" value="2,3,4,5-TETRAHYDROPYRIDINE-2,6-DICARBOXYLATE N-SUCCINYLTRANSFERASE"/>
    <property type="match status" value="1"/>
</dbReference>
<dbReference type="PANTHER" id="PTHR19136">
    <property type="entry name" value="MOLYBDENUM COFACTOR GUANYLYLTRANSFERASE"/>
    <property type="match status" value="1"/>
</dbReference>
<dbReference type="Pfam" id="PF14602">
    <property type="entry name" value="Hexapep_2"/>
    <property type="match status" value="1"/>
</dbReference>
<dbReference type="Pfam" id="PF14805">
    <property type="entry name" value="THDPS_N_2"/>
    <property type="match status" value="1"/>
</dbReference>
<dbReference type="SUPFAM" id="SSF51161">
    <property type="entry name" value="Trimeric LpxA-like enzymes"/>
    <property type="match status" value="1"/>
</dbReference>
<dbReference type="PROSITE" id="PS00101">
    <property type="entry name" value="HEXAPEP_TRANSFERASES"/>
    <property type="match status" value="1"/>
</dbReference>
<reference key="1">
    <citation type="submission" date="2007-11" db="EMBL/GenBank/DDBJ databases">
        <authorList>
            <consortium name="The Salmonella enterica serovar Arizonae Genome Sequencing Project"/>
            <person name="McClelland M."/>
            <person name="Sanderson E.K."/>
            <person name="Porwollik S."/>
            <person name="Spieth J."/>
            <person name="Clifton W.S."/>
            <person name="Fulton R."/>
            <person name="Chunyan W."/>
            <person name="Wollam A."/>
            <person name="Shah N."/>
            <person name="Pepin K."/>
            <person name="Bhonagiri V."/>
            <person name="Nash W."/>
            <person name="Johnson M."/>
            <person name="Thiruvilangam P."/>
            <person name="Wilson R."/>
        </authorList>
    </citation>
    <scope>NUCLEOTIDE SEQUENCE [LARGE SCALE GENOMIC DNA]</scope>
    <source>
        <strain>ATCC BAA-731 / CDC346-86 / RSK2980</strain>
    </source>
</reference>
<sequence>MQQLQNVIETAFERRADITPANVDTVTREAVNQVISLLDSGALRVAEKIDGQWVTHQWLKKAVLLSFRINDNQVIDGAESRYFDKVPMKFADYDEARFQKEGFRVVPPAAVRQGAFIARNTVLMPSYVNIGAYVDEGTMVDTWATVGSCAQIGKNVHLSGGVGIGGVLEPLQANPTIIEDNCFIGARSEVVEGVIVEEGSVISMGVYLGQSTKIYDRETGEVHYGRVPAGSVVVSGNLPSKDGKYSLYCAVIVKKVDAKTRGKVGINELLRTID</sequence>
<protein>
    <recommendedName>
        <fullName evidence="1">2,3,4,5-tetrahydropyridine-2,6-dicarboxylate N-succinyltransferase</fullName>
        <ecNumber evidence="1">2.3.1.117</ecNumber>
    </recommendedName>
    <alternativeName>
        <fullName evidence="1">Tetrahydrodipicolinate N-succinyltransferase</fullName>
        <shortName evidence="1">THDP succinyltransferase</shortName>
        <shortName evidence="1">THP succinyltransferase</shortName>
        <shortName evidence="1">Tetrahydropicolinate succinylase</shortName>
    </alternativeName>
</protein>
<comment type="catalytic activity">
    <reaction evidence="1">
        <text>(S)-2,3,4,5-tetrahydrodipicolinate + succinyl-CoA + H2O = (S)-2-succinylamino-6-oxoheptanedioate + CoA</text>
        <dbReference type="Rhea" id="RHEA:17325"/>
        <dbReference type="ChEBI" id="CHEBI:15377"/>
        <dbReference type="ChEBI" id="CHEBI:15685"/>
        <dbReference type="ChEBI" id="CHEBI:16845"/>
        <dbReference type="ChEBI" id="CHEBI:57287"/>
        <dbReference type="ChEBI" id="CHEBI:57292"/>
        <dbReference type="EC" id="2.3.1.117"/>
    </reaction>
</comment>
<comment type="pathway">
    <text evidence="1">Amino-acid biosynthesis; L-lysine biosynthesis via DAP pathway; LL-2,6-diaminopimelate from (S)-tetrahydrodipicolinate (succinylase route): step 1/3.</text>
</comment>
<comment type="subunit">
    <text evidence="1">Homotrimer.</text>
</comment>
<comment type="subcellular location">
    <subcellularLocation>
        <location evidence="1">Cytoplasm</location>
    </subcellularLocation>
</comment>
<comment type="similarity">
    <text evidence="1">Belongs to the transferase hexapeptide repeat family.</text>
</comment>
<accession>A9MPJ6</accession>
<gene>
    <name evidence="1" type="primary">dapD</name>
    <name type="ordered locus">SARI_02791</name>
</gene>
<organism>
    <name type="scientific">Salmonella arizonae (strain ATCC BAA-731 / CDC346-86 / RSK2980)</name>
    <dbReference type="NCBI Taxonomy" id="41514"/>
    <lineage>
        <taxon>Bacteria</taxon>
        <taxon>Pseudomonadati</taxon>
        <taxon>Pseudomonadota</taxon>
        <taxon>Gammaproteobacteria</taxon>
        <taxon>Enterobacterales</taxon>
        <taxon>Enterobacteriaceae</taxon>
        <taxon>Salmonella</taxon>
    </lineage>
</organism>
<proteinExistence type="inferred from homology"/>
<name>DAPD_SALAR</name>
<keyword id="KW-0012">Acyltransferase</keyword>
<keyword id="KW-0028">Amino-acid biosynthesis</keyword>
<keyword id="KW-0963">Cytoplasm</keyword>
<keyword id="KW-0220">Diaminopimelate biosynthesis</keyword>
<keyword id="KW-0457">Lysine biosynthesis</keyword>
<keyword id="KW-1185">Reference proteome</keyword>
<keyword id="KW-0677">Repeat</keyword>
<keyword id="KW-0808">Transferase</keyword>
<evidence type="ECO:0000255" key="1">
    <source>
        <dbReference type="HAMAP-Rule" id="MF_00811"/>
    </source>
</evidence>
<feature type="chain" id="PRO_1000083755" description="2,3,4,5-tetrahydropyridine-2,6-dicarboxylate N-succinyltransferase">
    <location>
        <begin position="1"/>
        <end position="274"/>
    </location>
</feature>
<feature type="binding site" evidence="1">
    <location>
        <position position="104"/>
    </location>
    <ligand>
        <name>substrate</name>
    </ligand>
</feature>
<feature type="binding site" evidence="1">
    <location>
        <position position="141"/>
    </location>
    <ligand>
        <name>substrate</name>
    </ligand>
</feature>